<reference key="1">
    <citation type="submission" date="2006-06" db="EMBL/GenBank/DDBJ databases">
        <title>Complete sequence of chromosome of Mesorhizobium sp. BNC1.</title>
        <authorList>
            <consortium name="US DOE Joint Genome Institute"/>
            <person name="Copeland A."/>
            <person name="Lucas S."/>
            <person name="Lapidus A."/>
            <person name="Barry K."/>
            <person name="Detter J.C."/>
            <person name="Glavina del Rio T."/>
            <person name="Hammon N."/>
            <person name="Israni S."/>
            <person name="Dalin E."/>
            <person name="Tice H."/>
            <person name="Pitluck S."/>
            <person name="Chertkov O."/>
            <person name="Brettin T."/>
            <person name="Bruce D."/>
            <person name="Han C."/>
            <person name="Tapia R."/>
            <person name="Gilna P."/>
            <person name="Schmutz J."/>
            <person name="Larimer F."/>
            <person name="Land M."/>
            <person name="Hauser L."/>
            <person name="Kyrpides N."/>
            <person name="Mikhailova N."/>
            <person name="Richardson P."/>
        </authorList>
    </citation>
    <scope>NUCLEOTIDE SEQUENCE [LARGE SCALE GENOMIC DNA]</scope>
    <source>
        <strain>BNC1</strain>
    </source>
</reference>
<gene>
    <name evidence="1" type="primary">rplR</name>
    <name type="ordered locus">Meso_1662</name>
</gene>
<name>RL18_CHESB</name>
<protein>
    <recommendedName>
        <fullName evidence="1">Large ribosomal subunit protein uL18</fullName>
    </recommendedName>
    <alternativeName>
        <fullName evidence="2">50S ribosomal protein L18</fullName>
    </alternativeName>
</protein>
<accession>Q11HR8</accession>
<keyword id="KW-0687">Ribonucleoprotein</keyword>
<keyword id="KW-0689">Ribosomal protein</keyword>
<keyword id="KW-0694">RNA-binding</keyword>
<keyword id="KW-0699">rRNA-binding</keyword>
<organism>
    <name type="scientific">Chelativorans sp. (strain BNC1)</name>
    <dbReference type="NCBI Taxonomy" id="266779"/>
    <lineage>
        <taxon>Bacteria</taxon>
        <taxon>Pseudomonadati</taxon>
        <taxon>Pseudomonadota</taxon>
        <taxon>Alphaproteobacteria</taxon>
        <taxon>Hyphomicrobiales</taxon>
        <taxon>Phyllobacteriaceae</taxon>
        <taxon>Chelativorans</taxon>
    </lineage>
</organism>
<feature type="chain" id="PRO_0000251327" description="Large ribosomal subunit protein uL18">
    <location>
        <begin position="1"/>
        <end position="119"/>
    </location>
</feature>
<sequence length="119" mass="12973">MVSKVSVTRRAGRVRRKLKAVATERPRLSVYRSSKHIYAQVIDDVKGHTLAAASSLDKDLREKLKTGADVDAAGVVGKLIAERAKKAGIDKVVFDRGPYIYHGRVKALADAAREGGLEF</sequence>
<evidence type="ECO:0000255" key="1">
    <source>
        <dbReference type="HAMAP-Rule" id="MF_01337"/>
    </source>
</evidence>
<evidence type="ECO:0000305" key="2"/>
<dbReference type="EMBL" id="CP000390">
    <property type="protein sequence ID" value="ABG63057.1"/>
    <property type="molecule type" value="Genomic_DNA"/>
</dbReference>
<dbReference type="SMR" id="Q11HR8"/>
<dbReference type="STRING" id="266779.Meso_1662"/>
<dbReference type="KEGG" id="mes:Meso_1662"/>
<dbReference type="eggNOG" id="COG0256">
    <property type="taxonomic scope" value="Bacteria"/>
</dbReference>
<dbReference type="HOGENOM" id="CLU_098841_0_1_5"/>
<dbReference type="OrthoDB" id="9810939at2"/>
<dbReference type="GO" id="GO:0022625">
    <property type="term" value="C:cytosolic large ribosomal subunit"/>
    <property type="evidence" value="ECO:0007669"/>
    <property type="project" value="TreeGrafter"/>
</dbReference>
<dbReference type="GO" id="GO:0008097">
    <property type="term" value="F:5S rRNA binding"/>
    <property type="evidence" value="ECO:0007669"/>
    <property type="project" value="TreeGrafter"/>
</dbReference>
<dbReference type="GO" id="GO:0003735">
    <property type="term" value="F:structural constituent of ribosome"/>
    <property type="evidence" value="ECO:0007669"/>
    <property type="project" value="InterPro"/>
</dbReference>
<dbReference type="GO" id="GO:0006412">
    <property type="term" value="P:translation"/>
    <property type="evidence" value="ECO:0007669"/>
    <property type="project" value="UniProtKB-UniRule"/>
</dbReference>
<dbReference type="CDD" id="cd00432">
    <property type="entry name" value="Ribosomal_L18_L5e"/>
    <property type="match status" value="1"/>
</dbReference>
<dbReference type="FunFam" id="3.30.420.100:FF:000001">
    <property type="entry name" value="50S ribosomal protein L18"/>
    <property type="match status" value="1"/>
</dbReference>
<dbReference type="Gene3D" id="3.30.420.100">
    <property type="match status" value="1"/>
</dbReference>
<dbReference type="HAMAP" id="MF_01337_B">
    <property type="entry name" value="Ribosomal_uL18_B"/>
    <property type="match status" value="1"/>
</dbReference>
<dbReference type="InterPro" id="IPR004389">
    <property type="entry name" value="Ribosomal_uL18_bac-type"/>
</dbReference>
<dbReference type="InterPro" id="IPR005484">
    <property type="entry name" value="Ribosomal_uL18_bac/euk"/>
</dbReference>
<dbReference type="NCBIfam" id="TIGR00060">
    <property type="entry name" value="L18_bact"/>
    <property type="match status" value="1"/>
</dbReference>
<dbReference type="PANTHER" id="PTHR12899">
    <property type="entry name" value="39S RIBOSOMAL PROTEIN L18, MITOCHONDRIAL"/>
    <property type="match status" value="1"/>
</dbReference>
<dbReference type="PANTHER" id="PTHR12899:SF3">
    <property type="entry name" value="LARGE RIBOSOMAL SUBUNIT PROTEIN UL18M"/>
    <property type="match status" value="1"/>
</dbReference>
<dbReference type="Pfam" id="PF00861">
    <property type="entry name" value="Ribosomal_L18p"/>
    <property type="match status" value="1"/>
</dbReference>
<dbReference type="SUPFAM" id="SSF53137">
    <property type="entry name" value="Translational machinery components"/>
    <property type="match status" value="1"/>
</dbReference>
<comment type="function">
    <text evidence="1">This is one of the proteins that bind and probably mediate the attachment of the 5S RNA into the large ribosomal subunit, where it forms part of the central protuberance.</text>
</comment>
<comment type="subunit">
    <text evidence="1">Part of the 50S ribosomal subunit; part of the 5S rRNA/L5/L18/L25 subcomplex. Contacts the 5S and 23S rRNAs.</text>
</comment>
<comment type="similarity">
    <text evidence="1">Belongs to the universal ribosomal protein uL18 family.</text>
</comment>
<proteinExistence type="inferred from homology"/>